<keyword id="KW-0002">3D-structure</keyword>
<keyword id="KW-0007">Acetylation</keyword>
<keyword id="KW-0025">Alternative splicing</keyword>
<keyword id="KW-0037">Angiogenesis</keyword>
<keyword id="KW-0963">Cytoplasm</keyword>
<keyword id="KW-0217">Developmental protein</keyword>
<keyword id="KW-0221">Differentiation</keyword>
<keyword id="KW-0225">Disease variant</keyword>
<keyword id="KW-0991">Intellectual disability</keyword>
<keyword id="KW-0539">Nucleus</keyword>
<keyword id="KW-0597">Phosphoprotein</keyword>
<keyword id="KW-1267">Proteomics identification</keyword>
<keyword id="KW-1185">Reference proteome</keyword>
<keyword id="KW-0677">Repeat</keyword>
<keyword id="KW-0802">TPR repeat</keyword>
<keyword id="KW-0804">Transcription</keyword>
<keyword id="KW-0805">Transcription regulation</keyword>
<organism>
    <name type="scientific">Homo sapiens</name>
    <name type="common">Human</name>
    <dbReference type="NCBI Taxonomy" id="9606"/>
    <lineage>
        <taxon>Eukaryota</taxon>
        <taxon>Metazoa</taxon>
        <taxon>Chordata</taxon>
        <taxon>Craniata</taxon>
        <taxon>Vertebrata</taxon>
        <taxon>Euteleostomi</taxon>
        <taxon>Mammalia</taxon>
        <taxon>Eutheria</taxon>
        <taxon>Euarchontoglires</taxon>
        <taxon>Primates</taxon>
        <taxon>Haplorrhini</taxon>
        <taxon>Catarrhini</taxon>
        <taxon>Hominidae</taxon>
        <taxon>Homo</taxon>
    </lineage>
</organism>
<feature type="chain" id="PRO_0000106294" description="N-alpha-acetyltransferase 15, NatA auxiliary subunit">
    <location>
        <begin position="1"/>
        <end position="866"/>
    </location>
</feature>
<feature type="repeat" description="TPR 1">
    <location>
        <begin position="46"/>
        <end position="79"/>
    </location>
</feature>
<feature type="repeat" description="TPR 2">
    <location>
        <begin position="80"/>
        <end position="113"/>
    </location>
</feature>
<feature type="repeat" description="TPR 3">
    <location>
        <begin position="148"/>
        <end position="184"/>
    </location>
</feature>
<feature type="repeat" description="TPR 4">
    <location>
        <begin position="224"/>
        <end position="257"/>
    </location>
</feature>
<feature type="repeat" description="TPR 5">
    <location>
        <begin position="374"/>
        <end position="407"/>
    </location>
</feature>
<feature type="repeat" description="TPR 6">
    <location>
        <begin position="409"/>
        <end position="441"/>
    </location>
</feature>
<feature type="repeat" description="TPR 7">
    <location>
        <begin position="485"/>
        <end position="518"/>
    </location>
</feature>
<feature type="repeat" description="TPR 8">
    <location>
        <begin position="672"/>
        <end position="705"/>
    </location>
</feature>
<feature type="region of interest" description="Interaction with HYPK" evidence="10">
    <location>
        <begin position="500"/>
        <end position="866"/>
    </location>
</feature>
<feature type="region of interest" description="Disordered" evidence="2">
    <location>
        <begin position="579"/>
        <end position="642"/>
    </location>
</feature>
<feature type="short sequence motif" description="Bipartite nuclear localization signal" evidence="1">
    <location>
        <begin position="612"/>
        <end position="629"/>
    </location>
</feature>
<feature type="compositionally biased region" description="Basic and acidic residues" evidence="2">
    <location>
        <begin position="579"/>
        <end position="594"/>
    </location>
</feature>
<feature type="compositionally biased region" description="Basic residues" evidence="2">
    <location>
        <begin position="595"/>
        <end position="604"/>
    </location>
</feature>
<feature type="compositionally biased region" description="Basic and acidic residues" evidence="2">
    <location>
        <begin position="606"/>
        <end position="621"/>
    </location>
</feature>
<feature type="modified residue" description="N6-acetyllysine" evidence="20">
    <location>
        <position position="262"/>
    </location>
</feature>
<feature type="modified residue" description="Phosphoserine" evidence="23">
    <location>
        <position position="302"/>
    </location>
</feature>
<feature type="modified residue" description="Phosphoserine" evidence="23">
    <location>
        <position position="537"/>
    </location>
</feature>
<feature type="modified residue" description="Phosphoserine" evidence="22 23">
    <location>
        <position position="588"/>
    </location>
</feature>
<feature type="modified residue" description="N6-acetyllysine" evidence="20">
    <location>
        <position position="735"/>
    </location>
</feature>
<feature type="modified residue" description="N6-acetyllysine" evidence="20">
    <location>
        <position position="756"/>
    </location>
</feature>
<feature type="modified residue" description="Phosphoserine" evidence="23">
    <location>
        <position position="855"/>
    </location>
</feature>
<feature type="modified residue" description="Phosphoserine" evidence="21 22">
    <location>
        <position position="856"/>
    </location>
</feature>
<feature type="splice variant" id="VSP_012560" description="In isoform 2." evidence="14">
    <original>HFIEITDDQFDF</original>
    <variation>KSLMTSLTFIHTV</variation>
    <location>
        <begin position="514"/>
        <end position="525"/>
    </location>
</feature>
<feature type="splice variant" id="VSP_012561" description="In isoform 2." evidence="14">
    <location>
        <begin position="526"/>
        <end position="866"/>
    </location>
</feature>
<feature type="sequence variant" id="VAR_080534" description="In MRD50." evidence="11">
    <location>
        <begin position="52"/>
        <end position="866"/>
    </location>
</feature>
<feature type="sequence variant" id="VAR_080535" description="In MRD50; uncertain significance; dbSNP:rs889543097." evidence="11">
    <original>D</original>
    <variation>N</variation>
    <location>
        <position position="112"/>
    </location>
</feature>
<feature type="sequence variant" id="VAR_080536" description="In MRD50." evidence="11">
    <location>
        <begin position="290"/>
        <end position="866"/>
    </location>
</feature>
<feature type="sequence variant" id="VAR_080537" description="In MRD50; uncertain significance; dbSNP:rs1436993876." evidence="11">
    <original>K</original>
    <variation>E</variation>
    <location>
        <position position="450"/>
    </location>
</feature>
<feature type="sequence variant" id="VAR_080538" description="In MRD50; uncertain significance; dbSNP:rs202204424." evidence="11">
    <original>A</original>
    <variation>V</variation>
    <location>
        <position position="475"/>
    </location>
</feature>
<feature type="sequence variant" id="VAR_080539" description="In MRD50." evidence="11">
    <location>
        <begin position="565"/>
        <end position="866"/>
    </location>
</feature>
<feature type="sequence variant" id="VAR_080540" description="In MRD50." evidence="11">
    <location>
        <begin position="696"/>
        <end position="866"/>
    </location>
</feature>
<feature type="sequence variant" id="VAR_080541" description="In MRD50." evidence="11">
    <location>
        <begin position="782"/>
        <end position="866"/>
    </location>
</feature>
<feature type="sequence variant" id="VAR_080542" description="In MRD50." evidence="11">
    <location>
        <begin position="797"/>
        <end position="866"/>
    </location>
</feature>
<feature type="mutagenesis site" description="Reduces binding to NAA50, but increases binding to HYPK. Reduces catalytic activity of the NatA complex while retaining the interaction with NAA10." evidence="13">
    <original>T</original>
    <variation>Y</variation>
    <location>
        <position position="406"/>
    </location>
</feature>
<feature type="mutagenesis site" description="Reduces binding to HYPK, increases binding to NAA50. Increases catalytic activity of the NatA complex while retaining the interaction with NAA10." evidence="13">
    <original>L</original>
    <variation>P</variation>
    <location>
        <position position="814"/>
    </location>
</feature>
<feature type="mutagenesis site" description="Reduces NatA complex stability and reduces catalytic activity." evidence="12">
    <original>Y</original>
    <variation>F</variation>
    <variation>A</variation>
    <location>
        <position position="834"/>
    </location>
</feature>
<feature type="sequence conflict" description="In Ref. 2; AAM48746." evidence="15" ref="2">
    <original>K</original>
    <variation>R</variation>
    <location>
        <position position="425"/>
    </location>
</feature>
<feature type="helix" evidence="25">
    <location>
        <begin position="8"/>
        <end position="22"/>
    </location>
</feature>
<feature type="helix" evidence="25">
    <location>
        <begin position="26"/>
        <end position="38"/>
    </location>
</feature>
<feature type="helix" evidence="25">
    <location>
        <begin position="40"/>
        <end position="42"/>
    </location>
</feature>
<feature type="helix" evidence="25">
    <location>
        <begin position="46"/>
        <end position="58"/>
    </location>
</feature>
<feature type="helix" evidence="25">
    <location>
        <begin position="62"/>
        <end position="75"/>
    </location>
</feature>
<feature type="helix" evidence="25">
    <location>
        <begin position="80"/>
        <end position="92"/>
    </location>
</feature>
<feature type="helix" evidence="25">
    <location>
        <begin position="96"/>
        <end position="109"/>
    </location>
</feature>
<feature type="helix" evidence="25">
    <location>
        <begin position="114"/>
        <end position="126"/>
    </location>
</feature>
<feature type="helix" evidence="25">
    <location>
        <begin position="130"/>
        <end position="143"/>
    </location>
</feature>
<feature type="strand" evidence="24">
    <location>
        <begin position="145"/>
        <end position="147"/>
    </location>
</feature>
<feature type="helix" evidence="25">
    <location>
        <begin position="148"/>
        <end position="161"/>
    </location>
</feature>
<feature type="helix" evidence="25">
    <location>
        <begin position="164"/>
        <end position="180"/>
    </location>
</feature>
<feature type="helix" evidence="25">
    <location>
        <begin position="186"/>
        <end position="202"/>
    </location>
</feature>
<feature type="helix" evidence="25">
    <location>
        <begin position="206"/>
        <end position="216"/>
    </location>
</feature>
<feature type="helix" evidence="25">
    <location>
        <begin position="217"/>
        <end position="219"/>
    </location>
</feature>
<feature type="helix" evidence="25">
    <location>
        <begin position="223"/>
        <end position="236"/>
    </location>
</feature>
<feature type="helix" evidence="25">
    <location>
        <begin position="240"/>
        <end position="253"/>
    </location>
</feature>
<feature type="helix" evidence="25">
    <location>
        <begin position="258"/>
        <end position="268"/>
    </location>
</feature>
<feature type="helix" evidence="25">
    <location>
        <begin position="273"/>
        <end position="286"/>
    </location>
</feature>
<feature type="helix" evidence="25">
    <location>
        <begin position="292"/>
        <end position="295"/>
    </location>
</feature>
<feature type="helix" evidence="25">
    <location>
        <begin position="297"/>
        <end position="300"/>
    </location>
</feature>
<feature type="helix" evidence="25">
    <location>
        <begin position="304"/>
        <end position="320"/>
    </location>
</feature>
<feature type="helix" evidence="25">
    <location>
        <begin position="325"/>
        <end position="329"/>
    </location>
</feature>
<feature type="helix" evidence="25">
    <location>
        <begin position="330"/>
        <end position="334"/>
    </location>
</feature>
<feature type="helix" evidence="25">
    <location>
        <begin position="336"/>
        <end position="355"/>
    </location>
</feature>
<feature type="strand" evidence="25">
    <location>
        <begin position="356"/>
        <end position="360"/>
    </location>
</feature>
<feature type="strand" evidence="24">
    <location>
        <begin position="361"/>
        <end position="363"/>
    </location>
</feature>
<feature type="helix" evidence="25">
    <location>
        <begin position="370"/>
        <end position="386"/>
    </location>
</feature>
<feature type="helix" evidence="25">
    <location>
        <begin position="390"/>
        <end position="403"/>
    </location>
</feature>
<feature type="helix" evidence="25">
    <location>
        <begin position="408"/>
        <end position="420"/>
    </location>
</feature>
<feature type="helix" evidence="25">
    <location>
        <begin position="424"/>
        <end position="437"/>
    </location>
</feature>
<feature type="strand" evidence="24">
    <location>
        <begin position="438"/>
        <end position="440"/>
    </location>
</feature>
<feature type="helix" evidence="25">
    <location>
        <begin position="442"/>
        <end position="454"/>
    </location>
</feature>
<feature type="helix" evidence="25">
    <location>
        <begin position="458"/>
        <end position="465"/>
    </location>
</feature>
<feature type="turn" evidence="25">
    <location>
        <begin position="466"/>
        <end position="468"/>
    </location>
</feature>
<feature type="strand" evidence="25">
    <location>
        <begin position="471"/>
        <end position="473"/>
    </location>
</feature>
<feature type="helix" evidence="25">
    <location>
        <begin position="475"/>
        <end position="481"/>
    </location>
</feature>
<feature type="helix" evidence="25">
    <location>
        <begin position="485"/>
        <end position="497"/>
    </location>
</feature>
<feature type="helix" evidence="25">
    <location>
        <begin position="501"/>
        <end position="520"/>
    </location>
</feature>
<feature type="helix" evidence="25">
    <location>
        <begin position="521"/>
        <end position="524"/>
    </location>
</feature>
<feature type="helix" evidence="25">
    <location>
        <begin position="525"/>
        <end position="532"/>
    </location>
</feature>
<feature type="helix" evidence="25">
    <location>
        <begin position="535"/>
        <end position="546"/>
    </location>
</feature>
<feature type="helix" evidence="25">
    <location>
        <begin position="547"/>
        <end position="550"/>
    </location>
</feature>
<feature type="helix" evidence="25">
    <location>
        <begin position="552"/>
        <end position="570"/>
    </location>
</feature>
<feature type="helix" evidence="25">
    <location>
        <begin position="644"/>
        <end position="648"/>
    </location>
</feature>
<feature type="helix" evidence="25">
    <location>
        <begin position="653"/>
        <end position="667"/>
    </location>
</feature>
<feature type="helix" evidence="25">
    <location>
        <begin position="672"/>
        <end position="684"/>
    </location>
</feature>
<feature type="helix" evidence="25">
    <location>
        <begin position="688"/>
        <end position="701"/>
    </location>
</feature>
<feature type="helix" evidence="25">
    <location>
        <begin position="706"/>
        <end position="721"/>
    </location>
</feature>
<feature type="strand" evidence="26">
    <location>
        <begin position="724"/>
        <end position="726"/>
    </location>
</feature>
<feature type="helix" evidence="25">
    <location>
        <begin position="728"/>
        <end position="740"/>
    </location>
</feature>
<feature type="helix" evidence="25">
    <location>
        <begin position="747"/>
        <end position="757"/>
    </location>
</feature>
<feature type="turn" evidence="24">
    <location>
        <begin position="758"/>
        <end position="760"/>
    </location>
</feature>
<feature type="helix" evidence="25">
    <location>
        <begin position="762"/>
        <end position="775"/>
    </location>
</feature>
<feature type="helix" evidence="24">
    <location>
        <begin position="777"/>
        <end position="779"/>
    </location>
</feature>
<feature type="helix" evidence="25">
    <location>
        <begin position="780"/>
        <end position="787"/>
    </location>
</feature>
<feature type="strand" evidence="26">
    <location>
        <begin position="794"/>
        <end position="796"/>
    </location>
</feature>
<feature type="helix" evidence="25">
    <location>
        <begin position="799"/>
        <end position="810"/>
    </location>
</feature>
<feature type="strand" evidence="25">
    <location>
        <begin position="812"/>
        <end position="814"/>
    </location>
</feature>
<feature type="helix" evidence="25">
    <location>
        <begin position="818"/>
        <end position="829"/>
    </location>
</feature>
<feature type="helix" evidence="24">
    <location>
        <begin position="836"/>
        <end position="838"/>
    </location>
</feature>
<comment type="function">
    <text evidence="3 6 7 10 12 13">Auxillary subunit of N-terminal acetyltransferase complexes which display alpha (N-terminal) acetyltransferase (NAT) activity (PubMed:15496142, PubMed:20154145, PubMed:29754825, PubMed:32042062). The NAT activity may be important for vascular, hematopoietic and neuronal growth and development (PubMed:15496142). Required to control retinal neovascularization in adult ocular endothelial cells (PubMed:11687548). In complex with XRCC6 and XRCC5 (Ku80), up-regulates transcription from the osteocalcin promoter (PubMed:12145306).</text>
</comment>
<comment type="subunit">
    <text evidence="6 7 8 9 10 12 13">Component of the N-terminal acetyltransferase A complex (also called the NatA complex) composed of NAA10 and NAA15 (PubMed:15496142, PubMed:20154145, PubMed:32042062). Within the complex interacts with NAA10 (PubMed:15496142, PubMed:20154145, PubMed:29754825, PubMed:32042062). Component of the N-terminal acetyltransferase A (NatA)/HYPK complex at least composed of NAA10, NAA15 and HYPK, which has N-terminal acetyltransferase activity (PubMed:20154145, PubMed:29754825, PubMed:32042062). In complex with NAA10, interacts with HYPK (PubMed:20154145, PubMed:29754825, PubMed:32042062). Component of the N-terminal acetyltransferase E (NatE) complex at least composed of NAA10, NAA15 and NAA50 (PubMed:29754825, PubMed:32042062). Within the complex interacts with NAA10; the interaction is required for binding to NAA50 (PubMed:29754825, PubMed:32042062). Interacts with NAAT50 (PubMed:16507339, PubMed:29754825, PubMed:32042062). The interaction of the NatA complex with NAA50 reduces the acetylation activity of the NatA complex (PubMed:32042062). Component of the N-terminal acetyltransferase E (NatE)/HYPK complex at least composed of NAA10, NAA15, NAA50 and HYPK (PubMed:32042062). In complex with NAA10 interacts with HYPK; the interaction with HYPK reduces the capacity of the NatA complex to interact with NAA50 (PubMed:20154145, PubMed:29754825, PubMed:32042062). Interacts with NAA11 (PubMed:16638120). Interacts with XRCC6 and XRCC5 (PubMed:12145306, PubMed:16507339, PubMed:29754825).</text>
</comment>
<comment type="interaction">
    <interactant intactId="EBI-1042540">
        <id>Q9BXJ9</id>
    </interactant>
    <interactant intactId="EBI-1048743">
        <id>Q9NX55</id>
        <label>HYPK</label>
    </interactant>
    <organismsDiffer>false</organismsDiffer>
    <experiments>7</experiments>
</comment>
<comment type="interaction">
    <interactant intactId="EBI-1042540">
        <id>Q9BXJ9</id>
    </interactant>
    <interactant intactId="EBI-747693">
        <id>P41227</id>
        <label>NAA10</label>
    </interactant>
    <organismsDiffer>false</organismsDiffer>
    <experiments>10</experiments>
</comment>
<comment type="interaction">
    <interactant intactId="EBI-1042540">
        <id>Q9BXJ9</id>
    </interactant>
    <interactant intactId="EBI-2585120">
        <id>Q9BSU3</id>
        <label>NAA11</label>
    </interactant>
    <organismsDiffer>false</organismsDiffer>
    <experiments>2</experiments>
</comment>
<comment type="interaction">
    <interactant intactId="EBI-1042540">
        <id>Q9BXJ9</id>
    </interactant>
    <interactant intactId="EBI-1052523">
        <id>Q9GZZ1</id>
        <label>NAA50</label>
    </interactant>
    <organismsDiffer>false</organismsDiffer>
    <experiments>5</experiments>
</comment>
<comment type="subcellular location">
    <subcellularLocation>
        <location>Cytoplasm</location>
    </subcellularLocation>
    <subcellularLocation>
        <location>Nucleus</location>
    </subcellularLocation>
    <text>Mainly cytoplasmic, nuclear in some cases. Present in the free cytosolic and cytoskeleton-bound polysomes, but not in the membrane-bound polysomes.</text>
</comment>
<comment type="alternative products">
    <event type="alternative splicing"/>
    <isoform>
        <id>Q9BXJ9-1</id>
        <name>1</name>
        <name>Long</name>
        <sequence type="displayed"/>
    </isoform>
    <isoform>
        <id>Q9BXJ9-4</id>
        <name>2</name>
        <name>Short</name>
        <sequence type="described" ref="VSP_012560 VSP_012561"/>
    </isoform>
</comment>
<comment type="tissue specificity">
    <text evidence="3 4 5">Expressed at high levels in testis and in ocular endothelial cells. Also found in brain (corpus callosum), heart, colon, bone marrow and at lower levels in most adult tissues, including thyroid, liver, pancreas, mammary and salivary glands, lung, ovary, urogenital system and upper gastrointestinal tract. Overexpressed in gastric cancer, in papillary thyroid carcinomas and in a Burkitt lymphoma cell line (Daudi). Specifically suppressed in abnormal proliferating blood vessels in eyes of patients with proliferative diabetic retinopathy.</text>
</comment>
<comment type="PTM">
    <text>Cleaved by caspases during apoptosis, resulting in a stable 35 kDa fragment.</text>
</comment>
<comment type="disease" evidence="11">
    <disease id="DI-05151">
        <name>Intellectual developmental disorder, autosomal dominant 50, with behavioral abnormalities</name>
        <acronym>MRD50</acronym>
        <description>A disorder characterized by significantly below average general intellectual functioning associated with impairments in adaptive behavior and manifested during the developmental period.</description>
        <dbReference type="MIM" id="617787"/>
    </disease>
    <text>The disease is caused by variants affecting the gene represented in this entry.</text>
</comment>
<comment type="sequence caution" evidence="15">
    <conflict type="miscellaneous discrepancy">
        <sequence resource="EMBL-CDS" id="AAH39818"/>
    </conflict>
    <text>Contaminating sequence. Potential poly-A sequence.</text>
</comment>
<dbReference type="EMBL" id="AY039242">
    <property type="protein sequence ID" value="AAK68661.1"/>
    <property type="molecule type" value="mRNA"/>
</dbReference>
<dbReference type="EMBL" id="AY112670">
    <property type="protein sequence ID" value="AAM48746.1"/>
    <property type="molecule type" value="mRNA"/>
</dbReference>
<dbReference type="EMBL" id="AJ314788">
    <property type="protein sequence ID" value="CAC43228.1"/>
    <property type="molecule type" value="mRNA"/>
</dbReference>
<dbReference type="EMBL" id="AF327722">
    <property type="protein sequence ID" value="AAK15707.1"/>
    <property type="molecule type" value="mRNA"/>
</dbReference>
<dbReference type="EMBL" id="AK023402">
    <property type="protein sequence ID" value="BAB14562.1"/>
    <property type="molecule type" value="mRNA"/>
</dbReference>
<dbReference type="EMBL" id="AC097376">
    <property type="protein sequence ID" value="AAY40950.1"/>
    <property type="molecule type" value="Genomic_DNA"/>
</dbReference>
<dbReference type="EMBL" id="CH471056">
    <property type="protein sequence ID" value="EAX05119.1"/>
    <property type="molecule type" value="Genomic_DNA"/>
</dbReference>
<dbReference type="EMBL" id="BC039818">
    <property type="protein sequence ID" value="AAH39818.1"/>
    <property type="status" value="ALT_SEQ"/>
    <property type="molecule type" value="mRNA"/>
</dbReference>
<dbReference type="EMBL" id="BC093928">
    <property type="protein sequence ID" value="AAH93928.1"/>
    <property type="molecule type" value="mRNA"/>
</dbReference>
<dbReference type="EMBL" id="BC104806">
    <property type="protein sequence ID" value="AAI04807.1"/>
    <property type="molecule type" value="mRNA"/>
</dbReference>
<dbReference type="CCDS" id="CCDS43270.1">
    <molecule id="Q9BXJ9-1"/>
</dbReference>
<dbReference type="RefSeq" id="NP_476516.1">
    <molecule id="Q9BXJ9-1"/>
    <property type="nucleotide sequence ID" value="NM_057175.5"/>
</dbReference>
<dbReference type="PDB" id="6C95">
    <property type="method" value="X-ray"/>
    <property type="resolution" value="3.15 A"/>
    <property type="chains" value="A=1-866"/>
</dbReference>
<dbReference type="PDB" id="6C9M">
    <property type="method" value="X-ray"/>
    <property type="resolution" value="2.80 A"/>
    <property type="chains" value="A/C=1-866"/>
</dbReference>
<dbReference type="PDB" id="6PPL">
    <property type="method" value="EM"/>
    <property type="resolution" value="3.02 A"/>
    <property type="chains" value="B=1-866"/>
</dbReference>
<dbReference type="PDB" id="6PW9">
    <property type="method" value="EM"/>
    <property type="resolution" value="4.03 A"/>
    <property type="chains" value="B=1-866"/>
</dbReference>
<dbReference type="PDB" id="9F1B">
    <property type="method" value="EM"/>
    <property type="resolution" value="3.01 A"/>
    <property type="chains" value="DB=1-866"/>
</dbReference>
<dbReference type="PDB" id="9F1C">
    <property type="method" value="EM"/>
    <property type="resolution" value="3.78 A"/>
    <property type="chains" value="DB=1-866"/>
</dbReference>
<dbReference type="PDB" id="9F1D">
    <property type="method" value="EM"/>
    <property type="resolution" value="3.26 A"/>
    <property type="chains" value="DB=1-866"/>
</dbReference>
<dbReference type="PDB" id="9FPZ">
    <property type="method" value="EM"/>
    <property type="resolution" value="2.69 A"/>
    <property type="chains" value="B=1-841"/>
</dbReference>
<dbReference type="PDB" id="9FQ0">
    <property type="method" value="EM"/>
    <property type="resolution" value="4.67 A"/>
    <property type="chains" value="B=1-841"/>
</dbReference>
<dbReference type="PDBsum" id="6C95"/>
<dbReference type="PDBsum" id="6C9M"/>
<dbReference type="PDBsum" id="6PPL"/>
<dbReference type="PDBsum" id="6PW9"/>
<dbReference type="PDBsum" id="9F1B"/>
<dbReference type="PDBsum" id="9F1C"/>
<dbReference type="PDBsum" id="9F1D"/>
<dbReference type="PDBsum" id="9FPZ"/>
<dbReference type="PDBsum" id="9FQ0"/>
<dbReference type="EMDB" id="EMD-20442"/>
<dbReference type="EMDB" id="EMD-20501"/>
<dbReference type="EMDB" id="EMD-50124"/>
<dbReference type="EMDB" id="EMD-50125"/>
<dbReference type="EMDB" id="EMD-50126"/>
<dbReference type="EMDB" id="EMD-50641"/>
<dbReference type="EMDB" id="EMD-50642"/>
<dbReference type="SMR" id="Q9BXJ9"/>
<dbReference type="BioGRID" id="123146">
    <property type="interactions" value="192"/>
</dbReference>
<dbReference type="ComplexPortal" id="CPX-6271">
    <property type="entry name" value="NatA N-alpha-acetyltransferase complex, NAA10-NAA15 variant"/>
</dbReference>
<dbReference type="ComplexPortal" id="CPX-6273">
    <property type="entry name" value="NatA N-alpha-acetyltransferase complex, NAA11-NAA15 variant"/>
</dbReference>
<dbReference type="CORUM" id="Q9BXJ9"/>
<dbReference type="FunCoup" id="Q9BXJ9">
    <property type="interactions" value="4282"/>
</dbReference>
<dbReference type="IntAct" id="Q9BXJ9">
    <property type="interactions" value="67"/>
</dbReference>
<dbReference type="MINT" id="Q9BXJ9"/>
<dbReference type="STRING" id="9606.ENSP00000296543"/>
<dbReference type="GlyCosmos" id="Q9BXJ9">
    <property type="glycosylation" value="1 site, 1 glycan"/>
</dbReference>
<dbReference type="GlyGen" id="Q9BXJ9">
    <property type="glycosylation" value="1 site, 1 O-linked glycan (1 site)"/>
</dbReference>
<dbReference type="iPTMnet" id="Q9BXJ9"/>
<dbReference type="MetOSite" id="Q9BXJ9"/>
<dbReference type="PhosphoSitePlus" id="Q9BXJ9"/>
<dbReference type="SwissPalm" id="Q9BXJ9"/>
<dbReference type="BioMuta" id="NAA15"/>
<dbReference type="DMDM" id="57012969"/>
<dbReference type="jPOST" id="Q9BXJ9"/>
<dbReference type="MassIVE" id="Q9BXJ9"/>
<dbReference type="PaxDb" id="9606-ENSP00000296543"/>
<dbReference type="PeptideAtlas" id="Q9BXJ9"/>
<dbReference type="ProteomicsDB" id="79443">
    <molecule id="Q9BXJ9-1"/>
</dbReference>
<dbReference type="ProteomicsDB" id="79444">
    <molecule id="Q9BXJ9-4"/>
</dbReference>
<dbReference type="Pumba" id="Q9BXJ9"/>
<dbReference type="Antibodypedia" id="7371">
    <property type="antibodies" value="229 antibodies from 29 providers"/>
</dbReference>
<dbReference type="DNASU" id="80155"/>
<dbReference type="Ensembl" id="ENST00000296543.10">
    <molecule id="Q9BXJ9-1"/>
    <property type="protein sequence ID" value="ENSP00000296543.4"/>
    <property type="gene ID" value="ENSG00000164134.14"/>
</dbReference>
<dbReference type="GeneID" id="80155"/>
<dbReference type="KEGG" id="hsa:80155"/>
<dbReference type="MANE-Select" id="ENST00000296543.10">
    <property type="protein sequence ID" value="ENSP00000296543.4"/>
    <property type="RefSeq nucleotide sequence ID" value="NM_057175.5"/>
    <property type="RefSeq protein sequence ID" value="NP_476516.1"/>
</dbReference>
<dbReference type="UCSC" id="uc003ihu.2">
    <molecule id="Q9BXJ9-1"/>
    <property type="organism name" value="human"/>
</dbReference>
<dbReference type="AGR" id="HGNC:30782"/>
<dbReference type="CTD" id="80155"/>
<dbReference type="DisGeNET" id="80155"/>
<dbReference type="GeneCards" id="NAA15"/>
<dbReference type="HGNC" id="HGNC:30782">
    <property type="gene designation" value="NAA15"/>
</dbReference>
<dbReference type="HPA" id="ENSG00000164134">
    <property type="expression patterns" value="Low tissue specificity"/>
</dbReference>
<dbReference type="MalaCards" id="NAA15"/>
<dbReference type="MIM" id="608000">
    <property type="type" value="gene"/>
</dbReference>
<dbReference type="MIM" id="617787">
    <property type="type" value="phenotype"/>
</dbReference>
<dbReference type="neXtProt" id="NX_Q9BXJ9"/>
<dbReference type="OpenTargets" id="ENSG00000164134"/>
<dbReference type="Orphanet" id="528084">
    <property type="disease" value="Non-specific syndromic intellectual disability"/>
</dbReference>
<dbReference type="PharmGKB" id="PA165664293"/>
<dbReference type="VEuPathDB" id="HostDB:ENSG00000164134"/>
<dbReference type="eggNOG" id="KOG1156">
    <property type="taxonomic scope" value="Eukaryota"/>
</dbReference>
<dbReference type="GeneTree" id="ENSGT00950000183174"/>
<dbReference type="InParanoid" id="Q9BXJ9"/>
<dbReference type="OMA" id="MEMRADY"/>
<dbReference type="OrthoDB" id="10263032at2759"/>
<dbReference type="PAN-GO" id="Q9BXJ9">
    <property type="GO annotations" value="4 GO annotations based on evolutionary models"/>
</dbReference>
<dbReference type="PhylomeDB" id="Q9BXJ9"/>
<dbReference type="TreeFam" id="TF106301"/>
<dbReference type="BioCyc" id="MetaCyc:ENSG00000164134-MONOMER"/>
<dbReference type="BRENDA" id="2.3.1.255">
    <property type="organism ID" value="2681"/>
</dbReference>
<dbReference type="BRENDA" id="2.3.1.258">
    <property type="organism ID" value="2681"/>
</dbReference>
<dbReference type="PathwayCommons" id="Q9BXJ9"/>
<dbReference type="SABIO-RK" id="Q9BXJ9"/>
<dbReference type="SignaLink" id="Q9BXJ9"/>
<dbReference type="SIGNOR" id="Q9BXJ9"/>
<dbReference type="BioGRID-ORCS" id="80155">
    <property type="hits" value="764 hits in 1168 CRISPR screens"/>
</dbReference>
<dbReference type="ChiTaRS" id="NAA15">
    <property type="organism name" value="human"/>
</dbReference>
<dbReference type="GeneWiki" id="NARG1"/>
<dbReference type="GenomeRNAi" id="80155"/>
<dbReference type="Pharos" id="Q9BXJ9">
    <property type="development level" value="Tbio"/>
</dbReference>
<dbReference type="PRO" id="PR:Q9BXJ9"/>
<dbReference type="Proteomes" id="UP000005640">
    <property type="component" value="Chromosome 4"/>
</dbReference>
<dbReference type="RNAct" id="Q9BXJ9">
    <property type="molecule type" value="protein"/>
</dbReference>
<dbReference type="Bgee" id="ENSG00000164134">
    <property type="expression patterns" value="Expressed in calcaneal tendon and 198 other cell types or tissues"/>
</dbReference>
<dbReference type="ExpressionAtlas" id="Q9BXJ9">
    <property type="expression patterns" value="baseline and differential"/>
</dbReference>
<dbReference type="GO" id="GO:0005737">
    <property type="term" value="C:cytoplasm"/>
    <property type="evidence" value="ECO:0000314"/>
    <property type="project" value="UniProtKB"/>
</dbReference>
<dbReference type="GO" id="GO:0005829">
    <property type="term" value="C:cytosol"/>
    <property type="evidence" value="ECO:0000314"/>
    <property type="project" value="HPA"/>
</dbReference>
<dbReference type="GO" id="GO:0043231">
    <property type="term" value="C:intracellular membrane-bounded organelle"/>
    <property type="evidence" value="ECO:0000314"/>
    <property type="project" value="HPA"/>
</dbReference>
<dbReference type="GO" id="GO:0016020">
    <property type="term" value="C:membrane"/>
    <property type="evidence" value="ECO:0007005"/>
    <property type="project" value="UniProtKB"/>
</dbReference>
<dbReference type="GO" id="GO:0031415">
    <property type="term" value="C:NatA complex"/>
    <property type="evidence" value="ECO:0000314"/>
    <property type="project" value="UniProtKB"/>
</dbReference>
<dbReference type="GO" id="GO:0016604">
    <property type="term" value="C:nuclear body"/>
    <property type="evidence" value="ECO:0000314"/>
    <property type="project" value="HPA"/>
</dbReference>
<dbReference type="GO" id="GO:0005634">
    <property type="term" value="C:nucleus"/>
    <property type="evidence" value="ECO:0000314"/>
    <property type="project" value="UniProtKB"/>
</dbReference>
<dbReference type="GO" id="GO:0005667">
    <property type="term" value="C:transcription regulator complex"/>
    <property type="evidence" value="ECO:0000314"/>
    <property type="project" value="UniProtKB"/>
</dbReference>
<dbReference type="GO" id="GO:0010698">
    <property type="term" value="F:acetyltransferase activator activity"/>
    <property type="evidence" value="ECO:0000318"/>
    <property type="project" value="GO_Central"/>
</dbReference>
<dbReference type="GO" id="GO:0043022">
    <property type="term" value="F:ribosome binding"/>
    <property type="evidence" value="ECO:0000314"/>
    <property type="project" value="UniProtKB"/>
</dbReference>
<dbReference type="GO" id="GO:0003723">
    <property type="term" value="F:RNA binding"/>
    <property type="evidence" value="ECO:0007005"/>
    <property type="project" value="UniProtKB"/>
</dbReference>
<dbReference type="GO" id="GO:0001525">
    <property type="term" value="P:angiogenesis"/>
    <property type="evidence" value="ECO:0007669"/>
    <property type="project" value="UniProtKB-KW"/>
</dbReference>
<dbReference type="GO" id="GO:0030154">
    <property type="term" value="P:cell differentiation"/>
    <property type="evidence" value="ECO:0007669"/>
    <property type="project" value="UniProtKB-KW"/>
</dbReference>
<dbReference type="GO" id="GO:0006474">
    <property type="term" value="P:N-terminal protein amino acid acetylation"/>
    <property type="evidence" value="ECO:0000314"/>
    <property type="project" value="UniProtKB"/>
</dbReference>
<dbReference type="GO" id="GO:0043066">
    <property type="term" value="P:negative regulation of apoptotic process"/>
    <property type="evidence" value="ECO:0000315"/>
    <property type="project" value="UniProtKB"/>
</dbReference>
<dbReference type="GO" id="GO:0045893">
    <property type="term" value="P:positive regulation of DNA-templated transcription"/>
    <property type="evidence" value="ECO:0000314"/>
    <property type="project" value="UniProtKB"/>
</dbReference>
<dbReference type="GO" id="GO:0050821">
    <property type="term" value="P:protein stabilization"/>
    <property type="evidence" value="ECO:0000315"/>
    <property type="project" value="UniProtKB"/>
</dbReference>
<dbReference type="FunFam" id="1.25.40.1010:FF:000001">
    <property type="entry name" value="N-alpha-acetyltransferase 15, NatA auxiliary subunit"/>
    <property type="match status" value="1"/>
</dbReference>
<dbReference type="FunFam" id="1.25.40.1040:FF:000001">
    <property type="entry name" value="N-alpha-acetyltransferase 15, NatA auxiliary subunit"/>
    <property type="match status" value="1"/>
</dbReference>
<dbReference type="Gene3D" id="1.25.40.1010">
    <property type="match status" value="1"/>
</dbReference>
<dbReference type="Gene3D" id="1.25.40.1040">
    <property type="match status" value="1"/>
</dbReference>
<dbReference type="InterPro" id="IPR021183">
    <property type="entry name" value="NatA_aux_su"/>
</dbReference>
<dbReference type="InterPro" id="IPR011990">
    <property type="entry name" value="TPR-like_helical_dom_sf"/>
</dbReference>
<dbReference type="InterPro" id="IPR019734">
    <property type="entry name" value="TPR_rpt"/>
</dbReference>
<dbReference type="PANTHER" id="PTHR22767:SF6">
    <property type="entry name" value="N-ALPHA-ACETYLTRANSFERASE 15, NATA AUXILIARY SUBUNIT"/>
    <property type="match status" value="1"/>
</dbReference>
<dbReference type="PANTHER" id="PTHR22767">
    <property type="entry name" value="N-TERMINAL ACETYLTRANSFERASE-RELATED"/>
    <property type="match status" value="1"/>
</dbReference>
<dbReference type="Pfam" id="PF12569">
    <property type="entry name" value="NatA_aux_su"/>
    <property type="match status" value="1"/>
</dbReference>
<dbReference type="Pfam" id="PF13181">
    <property type="entry name" value="TPR_8"/>
    <property type="match status" value="1"/>
</dbReference>
<dbReference type="PIRSF" id="PIRSF000422">
    <property type="entry name" value="N-terminal-AcTrfase-A_aux_su"/>
    <property type="match status" value="1"/>
</dbReference>
<dbReference type="SMART" id="SM00028">
    <property type="entry name" value="TPR"/>
    <property type="match status" value="6"/>
</dbReference>
<dbReference type="SUPFAM" id="SSF48452">
    <property type="entry name" value="TPR-like"/>
    <property type="match status" value="1"/>
</dbReference>
<dbReference type="PROSITE" id="PS50005">
    <property type="entry name" value="TPR"/>
    <property type="match status" value="5"/>
</dbReference>
<dbReference type="PROSITE" id="PS50293">
    <property type="entry name" value="TPR_REGION"/>
    <property type="match status" value="2"/>
</dbReference>
<gene>
    <name type="primary">NAA15</name>
    <name type="synonym">GA19</name>
    <name type="synonym">NARG1</name>
    <name type="synonym">NATH</name>
    <name type="synonym">TBDN100</name>
</gene>
<name>NAA15_HUMAN</name>
<accession>Q9BXJ9</accession>
<accession>D3DNY6</accession>
<accession>Q52LG9</accession>
<accession>Q8IWH4</accession>
<accession>Q8NEV2</accession>
<accession>Q9H8P6</accession>
<sequence>MPAVSLPPKENALFKRILRCYEHKQYRNGLKFCKQILSNPKFAEHGETLAMKGLTLNCLGKKEEAYELVRRGLRNDLKSHVCWHVYGLLQRSDKKYDEAIKCYRNALKWDKDNLQILRDLSLLQIQMRDLEGYRETRYQLLQLRPAQRASWIGYAIAYHLLEDYEMAAKILEEFRKTQQTSPDKVDYEYSELLLYQNQVLREAGLYREALEHLCTYEKQICDKLAVEETKGELLLQLCRLEDAADVYRGLQERNPENWAYYKGLEKALKPANMLERLKIYEEAWTKYPRGLVPRRLPLNFLSGEKFKECLDKFLRMNFSKGCPPVFNTLRSLYKDKEKVAIIEELVVGYETSLKSCRLFNPNDDGKEEPPTTLLWVQYYLAQHYDKIGQPSIALEYINTAIESTPTLIELFLVKAKIYKHAGNIKEAARWMDEAQALDTADRFINSKCAKYMLKANLIKEAEEMCSKFTREGTSAVENLNEMQCMWFQTECAQAYKAMNKFGEALKKCHEIERHFIEITDDQFDFHTYCMRKITLRSYVDLLKLEDVLRQHPFYFKAARIAIEIYLKLHDNPLTDENKEHEADTANMSDKELKKLRNKQRRAQKKAQIEEEKKNAEKEKQQRNQKKKKDDDDEEIGGPKEELIPEKLAKVETPLEEAIKFLTPLKNLVKNKIETHLFAFEIYFRKEKFLLMLQSVKRAFAIDSSHPWLHECMIRLFNTAVCESKDLSDTVRTVLKQEMNRLFGATNPKNFNETFLKRNSDSLPHRLSAAKMVYYLDPSSQKRAIELATTLDESLTNRNLQTCMEVLEALYDGSLGDCKEAAEIYRANCHKLFPYALAFMPPGYEEDMKITVNGDSSAEAEELANEI</sequence>
<protein>
    <recommendedName>
        <fullName>N-alpha-acetyltransferase 15, NatA auxiliary subunit</fullName>
    </recommendedName>
    <alternativeName>
        <fullName>Gastric cancer antigen Ga19</fullName>
    </alternativeName>
    <alternativeName>
        <fullName>N-terminal acetyltransferase</fullName>
    </alternativeName>
    <alternativeName>
        <fullName>NMDA receptor-regulated protein 1</fullName>
    </alternativeName>
    <alternativeName>
        <fullName>Protein tubedown-1</fullName>
    </alternativeName>
    <alternativeName>
        <fullName>Tbdn100</fullName>
    </alternativeName>
</protein>
<evidence type="ECO:0000255" key="1"/>
<evidence type="ECO:0000256" key="2">
    <source>
        <dbReference type="SAM" id="MobiDB-lite"/>
    </source>
</evidence>
<evidence type="ECO:0000269" key="3">
    <source>
    </source>
</evidence>
<evidence type="ECO:0000269" key="4">
    <source>
    </source>
</evidence>
<evidence type="ECO:0000269" key="5">
    <source>
    </source>
</evidence>
<evidence type="ECO:0000269" key="6">
    <source>
    </source>
</evidence>
<evidence type="ECO:0000269" key="7">
    <source>
    </source>
</evidence>
<evidence type="ECO:0000269" key="8">
    <source>
    </source>
</evidence>
<evidence type="ECO:0000269" key="9">
    <source>
    </source>
</evidence>
<evidence type="ECO:0000269" key="10">
    <source>
    </source>
</evidence>
<evidence type="ECO:0000269" key="11">
    <source>
    </source>
</evidence>
<evidence type="ECO:0000269" key="12">
    <source>
    </source>
</evidence>
<evidence type="ECO:0000269" key="13">
    <source>
    </source>
</evidence>
<evidence type="ECO:0000303" key="14">
    <source>
    </source>
</evidence>
<evidence type="ECO:0000305" key="15"/>
<evidence type="ECO:0007744" key="16">
    <source>
        <dbReference type="PDB" id="6C95"/>
    </source>
</evidence>
<evidence type="ECO:0007744" key="17">
    <source>
        <dbReference type="PDB" id="6C9M"/>
    </source>
</evidence>
<evidence type="ECO:0007744" key="18">
    <source>
        <dbReference type="PDB" id="6PPL"/>
    </source>
</evidence>
<evidence type="ECO:0007744" key="19">
    <source>
        <dbReference type="PDB" id="6PW9"/>
    </source>
</evidence>
<evidence type="ECO:0007744" key="20">
    <source>
    </source>
</evidence>
<evidence type="ECO:0007744" key="21">
    <source>
    </source>
</evidence>
<evidence type="ECO:0007744" key="22">
    <source>
    </source>
</evidence>
<evidence type="ECO:0007744" key="23">
    <source>
    </source>
</evidence>
<evidence type="ECO:0007829" key="24">
    <source>
        <dbReference type="PDB" id="6C95"/>
    </source>
</evidence>
<evidence type="ECO:0007829" key="25">
    <source>
        <dbReference type="PDB" id="6C9M"/>
    </source>
</evidence>
<evidence type="ECO:0007829" key="26">
    <source>
        <dbReference type="PDB" id="6PPL"/>
    </source>
</evidence>
<proteinExistence type="evidence at protein level"/>
<reference key="1">
    <citation type="journal article" date="2002" name="Br. J. Cancer">
        <title>Serological identification and expression analysis of gastric cancer-associated genes.</title>
        <authorList>
            <person name="Line A."/>
            <person name="Stengrevics A."/>
            <person name="Slucka Z."/>
            <person name="Li G."/>
            <person name="Jankevics E."/>
            <person name="Rees R.C."/>
        </authorList>
    </citation>
    <scope>NUCLEOTIDE SEQUENCE [MRNA] (ISOFORM 1)</scope>
    <scope>TISSUE SPECIFICITY</scope>
    <source>
        <tissue>Gastric adenocarcinoma</tissue>
    </source>
</reference>
<reference key="2">
    <citation type="journal article" date="2002" name="J. Biol. Chem.">
        <title>Regulation of osteocalcin gene expression by a novel Ku antigen transcription factor complex.</title>
        <authorList>
            <person name="Willis D.M."/>
            <person name="Loewy A.P."/>
            <person name="Charlton-Kachigian N."/>
            <person name="Shao J.-S."/>
            <person name="Ornitz D.M."/>
            <person name="Towler D.A."/>
        </authorList>
    </citation>
    <scope>NUCLEOTIDE SEQUENCE [MRNA] (ISOFORM 1)</scope>
    <scope>IDENTIFICATION BY MASS SPECTROMETRY</scope>
    <scope>INTERACTION WITH XRCC6 AND XRCC5</scope>
    <scope>FUNCTION</scope>
    <source>
        <tissue>Heart</tissue>
        <tissue>Osteoblast</tissue>
    </source>
</reference>
<reference key="3">
    <citation type="journal article" date="2002" name="Oncogene">
        <title>NATH, a novel gene overexpressed in papillary thyroid carcinomas.</title>
        <authorList>
            <person name="Fluge O."/>
            <person name="Bruland O."/>
            <person name="Akslen L.A."/>
            <person name="Varhaug J.E."/>
            <person name="Lillehaug J.R."/>
        </authorList>
    </citation>
    <scope>NUCLEOTIDE SEQUENCE [MRNA] (ISOFORM 1)</scope>
    <scope>SUBCELLULAR LOCATION</scope>
    <scope>TISSUE SPECIFICITY</scope>
    <source>
        <tissue>Thyroid carcinoma</tissue>
    </source>
</reference>
<reference key="4">
    <citation type="journal article" date="2002" name="Sheng Wu Hua Xue Yu Sheng Wu Wu Li Xue Bao">
        <title>Cloning and analysis of a novel gene encoding N-terminal acetyltransferase subunit.</title>
        <authorList>
            <person name="He Y.G."/>
            <person name="Xie Y.F."/>
            <person name="Chen Y."/>
            <person name="Qian W."/>
            <person name="Lai J.H."/>
            <person name="Tan D.Y."/>
        </authorList>
    </citation>
    <scope>NUCLEOTIDE SEQUENCE [MRNA] (ISOFORM 1)</scope>
</reference>
<reference key="5">
    <citation type="journal article" date="2004" name="Nat. Genet.">
        <title>Complete sequencing and characterization of 21,243 full-length human cDNAs.</title>
        <authorList>
            <person name="Ota T."/>
            <person name="Suzuki Y."/>
            <person name="Nishikawa T."/>
            <person name="Otsuki T."/>
            <person name="Sugiyama T."/>
            <person name="Irie R."/>
            <person name="Wakamatsu A."/>
            <person name="Hayashi K."/>
            <person name="Sato H."/>
            <person name="Nagai K."/>
            <person name="Kimura K."/>
            <person name="Makita H."/>
            <person name="Sekine M."/>
            <person name="Obayashi M."/>
            <person name="Nishi T."/>
            <person name="Shibahara T."/>
            <person name="Tanaka T."/>
            <person name="Ishii S."/>
            <person name="Yamamoto J."/>
            <person name="Saito K."/>
            <person name="Kawai Y."/>
            <person name="Isono Y."/>
            <person name="Nakamura Y."/>
            <person name="Nagahari K."/>
            <person name="Murakami K."/>
            <person name="Yasuda T."/>
            <person name="Iwayanagi T."/>
            <person name="Wagatsuma M."/>
            <person name="Shiratori A."/>
            <person name="Sudo H."/>
            <person name="Hosoiri T."/>
            <person name="Kaku Y."/>
            <person name="Kodaira H."/>
            <person name="Kondo H."/>
            <person name="Sugawara M."/>
            <person name="Takahashi M."/>
            <person name="Kanda K."/>
            <person name="Yokoi T."/>
            <person name="Furuya T."/>
            <person name="Kikkawa E."/>
            <person name="Omura Y."/>
            <person name="Abe K."/>
            <person name="Kamihara K."/>
            <person name="Katsuta N."/>
            <person name="Sato K."/>
            <person name="Tanikawa M."/>
            <person name="Yamazaki M."/>
            <person name="Ninomiya K."/>
            <person name="Ishibashi T."/>
            <person name="Yamashita H."/>
            <person name="Murakawa K."/>
            <person name="Fujimori K."/>
            <person name="Tanai H."/>
            <person name="Kimata M."/>
            <person name="Watanabe M."/>
            <person name="Hiraoka S."/>
            <person name="Chiba Y."/>
            <person name="Ishida S."/>
            <person name="Ono Y."/>
            <person name="Takiguchi S."/>
            <person name="Watanabe S."/>
            <person name="Yosida M."/>
            <person name="Hotuta T."/>
            <person name="Kusano J."/>
            <person name="Kanehori K."/>
            <person name="Takahashi-Fujii A."/>
            <person name="Hara H."/>
            <person name="Tanase T.-O."/>
            <person name="Nomura Y."/>
            <person name="Togiya S."/>
            <person name="Komai F."/>
            <person name="Hara R."/>
            <person name="Takeuchi K."/>
            <person name="Arita M."/>
            <person name="Imose N."/>
            <person name="Musashino K."/>
            <person name="Yuuki H."/>
            <person name="Oshima A."/>
            <person name="Sasaki N."/>
            <person name="Aotsuka S."/>
            <person name="Yoshikawa Y."/>
            <person name="Matsunawa H."/>
            <person name="Ichihara T."/>
            <person name="Shiohata N."/>
            <person name="Sano S."/>
            <person name="Moriya S."/>
            <person name="Momiyama H."/>
            <person name="Satoh N."/>
            <person name="Takami S."/>
            <person name="Terashima Y."/>
            <person name="Suzuki O."/>
            <person name="Nakagawa S."/>
            <person name="Senoh A."/>
            <person name="Mizoguchi H."/>
            <person name="Goto Y."/>
            <person name="Shimizu F."/>
            <person name="Wakebe H."/>
            <person name="Hishigaki H."/>
            <person name="Watanabe T."/>
            <person name="Sugiyama A."/>
            <person name="Takemoto M."/>
            <person name="Kawakami B."/>
            <person name="Yamazaki M."/>
            <person name="Watanabe K."/>
            <person name="Kumagai A."/>
            <person name="Itakura S."/>
            <person name="Fukuzumi Y."/>
            <person name="Fujimori Y."/>
            <person name="Komiyama M."/>
            <person name="Tashiro H."/>
            <person name="Tanigami A."/>
            <person name="Fujiwara T."/>
            <person name="Ono T."/>
            <person name="Yamada K."/>
            <person name="Fujii Y."/>
            <person name="Ozaki K."/>
            <person name="Hirao M."/>
            <person name="Ohmori Y."/>
            <person name="Kawabata A."/>
            <person name="Hikiji T."/>
            <person name="Kobatake N."/>
            <person name="Inagaki H."/>
            <person name="Ikema Y."/>
            <person name="Okamoto S."/>
            <person name="Okitani R."/>
            <person name="Kawakami T."/>
            <person name="Noguchi S."/>
            <person name="Itoh T."/>
            <person name="Shigeta K."/>
            <person name="Senba T."/>
            <person name="Matsumura K."/>
            <person name="Nakajima Y."/>
            <person name="Mizuno T."/>
            <person name="Morinaga M."/>
            <person name="Sasaki M."/>
            <person name="Togashi T."/>
            <person name="Oyama M."/>
            <person name="Hata H."/>
            <person name="Watanabe M."/>
            <person name="Komatsu T."/>
            <person name="Mizushima-Sugano J."/>
            <person name="Satoh T."/>
            <person name="Shirai Y."/>
            <person name="Takahashi Y."/>
            <person name="Nakagawa K."/>
            <person name="Okumura K."/>
            <person name="Nagase T."/>
            <person name="Nomura N."/>
            <person name="Kikuchi H."/>
            <person name="Masuho Y."/>
            <person name="Yamashita R."/>
            <person name="Nakai K."/>
            <person name="Yada T."/>
            <person name="Nakamura Y."/>
            <person name="Ohara O."/>
            <person name="Isogai T."/>
            <person name="Sugano S."/>
        </authorList>
    </citation>
    <scope>NUCLEOTIDE SEQUENCE [LARGE SCALE MRNA] (ISOFORM 2)</scope>
    <source>
        <tissue>Ovary</tissue>
    </source>
</reference>
<reference key="6">
    <citation type="journal article" date="2005" name="Nature">
        <title>Generation and annotation of the DNA sequences of human chromosomes 2 and 4.</title>
        <authorList>
            <person name="Hillier L.W."/>
            <person name="Graves T.A."/>
            <person name="Fulton R.S."/>
            <person name="Fulton L.A."/>
            <person name="Pepin K.H."/>
            <person name="Minx P."/>
            <person name="Wagner-McPherson C."/>
            <person name="Layman D."/>
            <person name="Wylie K."/>
            <person name="Sekhon M."/>
            <person name="Becker M.C."/>
            <person name="Fewell G.A."/>
            <person name="Delehaunty K.D."/>
            <person name="Miner T.L."/>
            <person name="Nash W.E."/>
            <person name="Kremitzki C."/>
            <person name="Oddy L."/>
            <person name="Du H."/>
            <person name="Sun H."/>
            <person name="Bradshaw-Cordum H."/>
            <person name="Ali J."/>
            <person name="Carter J."/>
            <person name="Cordes M."/>
            <person name="Harris A."/>
            <person name="Isak A."/>
            <person name="van Brunt A."/>
            <person name="Nguyen C."/>
            <person name="Du F."/>
            <person name="Courtney L."/>
            <person name="Kalicki J."/>
            <person name="Ozersky P."/>
            <person name="Abbott S."/>
            <person name="Armstrong J."/>
            <person name="Belter E.A."/>
            <person name="Caruso L."/>
            <person name="Cedroni M."/>
            <person name="Cotton M."/>
            <person name="Davidson T."/>
            <person name="Desai A."/>
            <person name="Elliott G."/>
            <person name="Erb T."/>
            <person name="Fronick C."/>
            <person name="Gaige T."/>
            <person name="Haakenson W."/>
            <person name="Haglund K."/>
            <person name="Holmes A."/>
            <person name="Harkins R."/>
            <person name="Kim K."/>
            <person name="Kruchowski S.S."/>
            <person name="Strong C.M."/>
            <person name="Grewal N."/>
            <person name="Goyea E."/>
            <person name="Hou S."/>
            <person name="Levy A."/>
            <person name="Martinka S."/>
            <person name="Mead K."/>
            <person name="McLellan M.D."/>
            <person name="Meyer R."/>
            <person name="Randall-Maher J."/>
            <person name="Tomlinson C."/>
            <person name="Dauphin-Kohlberg S."/>
            <person name="Kozlowicz-Reilly A."/>
            <person name="Shah N."/>
            <person name="Swearengen-Shahid S."/>
            <person name="Snider J."/>
            <person name="Strong J.T."/>
            <person name="Thompson J."/>
            <person name="Yoakum M."/>
            <person name="Leonard S."/>
            <person name="Pearman C."/>
            <person name="Trani L."/>
            <person name="Radionenko M."/>
            <person name="Waligorski J.E."/>
            <person name="Wang C."/>
            <person name="Rock S.M."/>
            <person name="Tin-Wollam A.-M."/>
            <person name="Maupin R."/>
            <person name="Latreille P."/>
            <person name="Wendl M.C."/>
            <person name="Yang S.-P."/>
            <person name="Pohl C."/>
            <person name="Wallis J.W."/>
            <person name="Spieth J."/>
            <person name="Bieri T.A."/>
            <person name="Berkowicz N."/>
            <person name="Nelson J.O."/>
            <person name="Osborne J."/>
            <person name="Ding L."/>
            <person name="Meyer R."/>
            <person name="Sabo A."/>
            <person name="Shotland Y."/>
            <person name="Sinha P."/>
            <person name="Wohldmann P.E."/>
            <person name="Cook L.L."/>
            <person name="Hickenbotham M.T."/>
            <person name="Eldred J."/>
            <person name="Williams D."/>
            <person name="Jones T.A."/>
            <person name="She X."/>
            <person name="Ciccarelli F.D."/>
            <person name="Izaurralde E."/>
            <person name="Taylor J."/>
            <person name="Schmutz J."/>
            <person name="Myers R.M."/>
            <person name="Cox D.R."/>
            <person name="Huang X."/>
            <person name="McPherson J.D."/>
            <person name="Mardis E.R."/>
            <person name="Clifton S.W."/>
            <person name="Warren W.C."/>
            <person name="Chinwalla A.T."/>
            <person name="Eddy S.R."/>
            <person name="Marra M.A."/>
            <person name="Ovcharenko I."/>
            <person name="Furey T.S."/>
            <person name="Miller W."/>
            <person name="Eichler E.E."/>
            <person name="Bork P."/>
            <person name="Suyama M."/>
            <person name="Torrents D."/>
            <person name="Waterston R.H."/>
            <person name="Wilson R.K."/>
        </authorList>
    </citation>
    <scope>NUCLEOTIDE SEQUENCE [LARGE SCALE GENOMIC DNA]</scope>
</reference>
<reference key="7">
    <citation type="submission" date="2005-09" db="EMBL/GenBank/DDBJ databases">
        <authorList>
            <person name="Mural R.J."/>
            <person name="Istrail S."/>
            <person name="Sutton G.G."/>
            <person name="Florea L."/>
            <person name="Halpern A.L."/>
            <person name="Mobarry C.M."/>
            <person name="Lippert R."/>
            <person name="Walenz B."/>
            <person name="Shatkay H."/>
            <person name="Dew I."/>
            <person name="Miller J.R."/>
            <person name="Flanigan M.J."/>
            <person name="Edwards N.J."/>
            <person name="Bolanos R."/>
            <person name="Fasulo D."/>
            <person name="Halldorsson B.V."/>
            <person name="Hannenhalli S."/>
            <person name="Turner R."/>
            <person name="Yooseph S."/>
            <person name="Lu F."/>
            <person name="Nusskern D.R."/>
            <person name="Shue B.C."/>
            <person name="Zheng X.H."/>
            <person name="Zhong F."/>
            <person name="Delcher A.L."/>
            <person name="Huson D.H."/>
            <person name="Kravitz S.A."/>
            <person name="Mouchard L."/>
            <person name="Reinert K."/>
            <person name="Remington K.A."/>
            <person name="Clark A.G."/>
            <person name="Waterman M.S."/>
            <person name="Eichler E.E."/>
            <person name="Adams M.D."/>
            <person name="Hunkapiller M.W."/>
            <person name="Myers E.W."/>
            <person name="Venter J.C."/>
        </authorList>
    </citation>
    <scope>NUCLEOTIDE SEQUENCE [LARGE SCALE GENOMIC DNA]</scope>
</reference>
<reference key="8">
    <citation type="journal article" date="2004" name="Genome Res.">
        <title>The status, quality, and expansion of the NIH full-length cDNA project: the Mammalian Gene Collection (MGC).</title>
        <authorList>
            <consortium name="The MGC Project Team"/>
        </authorList>
    </citation>
    <scope>NUCLEOTIDE SEQUENCE [LARGE SCALE MRNA] (ISOFORM 1)</scope>
    <source>
        <tissue>Brain</tissue>
        <tissue>Lymph</tissue>
    </source>
</reference>
<reference key="9">
    <citation type="journal article" date="2001" name="Invest. Ophthalmol. Vis. Sci.">
        <title>Suppressed expression of tubedown-1 in retinal neovascularization of proliferative diabetic retinopathy.</title>
        <authorList>
            <person name="Gendron R.L."/>
            <person name="Good W.V."/>
            <person name="Adams L.C."/>
            <person name="Paradis H."/>
        </authorList>
    </citation>
    <scope>FUNCTION</scope>
    <scope>TISSUE SPECIFICITY</scope>
</reference>
<reference key="10">
    <citation type="journal article" date="2005" name="Biochem. J.">
        <title>Identification and characterization of the human ARD1-NATH protein acetyltransferase complex.</title>
        <authorList>
            <person name="Arnesen T."/>
            <person name="Anderson D."/>
            <person name="Baldersheim C."/>
            <person name="Lanotte M."/>
            <person name="Varhaug J.E."/>
            <person name="Lillehaug J.R."/>
        </authorList>
    </citation>
    <scope>FUNCTION</scope>
    <scope>SUBCELLULAR LOCATION</scope>
    <scope>IDENTIFICATION BY MASS SPECTROMETRY</scope>
    <scope>INTERACTION WITH NAA10</scope>
</reference>
<reference key="11">
    <citation type="journal article" date="2006" name="BMC Biochem.">
        <title>Characterization of hARD2, a processed hARD1 gene duplicate, encoding a human protein N-alpha-acetyltransferase.</title>
        <authorList>
            <person name="Arnesen T."/>
            <person name="Betts M.J."/>
            <person name="Pendino F."/>
            <person name="Liberles D.A."/>
            <person name="Anderson D."/>
            <person name="Caro J."/>
            <person name="Kong X."/>
            <person name="Varhaug J.E."/>
            <person name="Lillehaug J.R."/>
        </authorList>
    </citation>
    <scope>INTERACTION WITH NAA11</scope>
</reference>
<reference key="12">
    <citation type="journal article" date="2006" name="Cell">
        <title>Global, in vivo, and site-specific phosphorylation dynamics in signaling networks.</title>
        <authorList>
            <person name="Olsen J.V."/>
            <person name="Blagoev B."/>
            <person name="Gnad F."/>
            <person name="Macek B."/>
            <person name="Kumar C."/>
            <person name="Mortensen P."/>
            <person name="Mann M."/>
        </authorList>
    </citation>
    <scope>IDENTIFICATION BY MASS SPECTROMETRY [LARGE SCALE ANALYSIS]</scope>
    <source>
        <tissue>Cervix carcinoma</tissue>
    </source>
</reference>
<reference key="13">
    <citation type="journal article" date="2006" name="Gene">
        <title>Cloning and characterization of hNAT5/hSAN: an evolutionarily conserved component of the NatA protein N-alpha-acetyltransferase complex.</title>
        <authorList>
            <person name="Arnesen T."/>
            <person name="Anderson D."/>
            <person name="Torsvik J."/>
            <person name="Halseth H.B."/>
            <person name="Varhaug J.E."/>
            <person name="Lillehaug J.R."/>
        </authorList>
    </citation>
    <scope>INTERACTION WITH NAA50</scope>
</reference>
<reference key="14">
    <citation type="journal article" date="2008" name="Proc. Natl. Acad. Sci. U.S.A.">
        <title>A quantitative atlas of mitotic phosphorylation.</title>
        <authorList>
            <person name="Dephoure N."/>
            <person name="Zhou C."/>
            <person name="Villen J."/>
            <person name="Beausoleil S.A."/>
            <person name="Bakalarski C.E."/>
            <person name="Elledge S.J."/>
            <person name="Gygi S.P."/>
        </authorList>
    </citation>
    <scope>IDENTIFICATION BY MASS SPECTROMETRY [LARGE SCALE ANALYSIS]</scope>
    <source>
        <tissue>Cervix carcinoma</tissue>
    </source>
</reference>
<reference key="15">
    <citation type="journal article" date="2009" name="Anal. Chem.">
        <title>Lys-N and trypsin cover complementary parts of the phosphoproteome in a refined SCX-based approach.</title>
        <authorList>
            <person name="Gauci S."/>
            <person name="Helbig A.O."/>
            <person name="Slijper M."/>
            <person name="Krijgsveld J."/>
            <person name="Heck A.J."/>
            <person name="Mohammed S."/>
        </authorList>
    </citation>
    <scope>IDENTIFICATION BY MASS SPECTROMETRY [LARGE SCALE ANALYSIS]</scope>
</reference>
<reference key="16">
    <citation type="journal article" date="2009" name="BMC Proc.">
        <title>A synopsis of eukaryotic Nalpha-terminal acetyltransferases: nomenclature, subunits and substrates.</title>
        <authorList>
            <person name="Polevoda B."/>
            <person name="Arnesen T."/>
            <person name="Sherman F."/>
        </authorList>
    </citation>
    <scope>NOMENCLATURE</scope>
</reference>
<reference key="17">
    <citation type="journal article" date="2009" name="Sci. Signal.">
        <title>Quantitative phosphoproteomic analysis of T cell receptor signaling reveals system-wide modulation of protein-protein interactions.</title>
        <authorList>
            <person name="Mayya V."/>
            <person name="Lundgren D.H."/>
            <person name="Hwang S.-I."/>
            <person name="Rezaul K."/>
            <person name="Wu L."/>
            <person name="Eng J.K."/>
            <person name="Rodionov V."/>
            <person name="Han D.K."/>
        </authorList>
    </citation>
    <scope>IDENTIFICATION BY MASS SPECTROMETRY [LARGE SCALE ANALYSIS]</scope>
    <source>
        <tissue>Leukemic T-cell</tissue>
    </source>
</reference>
<reference key="18">
    <citation type="journal article" date="2009" name="Science">
        <title>Lysine acetylation targets protein complexes and co-regulates major cellular functions.</title>
        <authorList>
            <person name="Choudhary C."/>
            <person name="Kumar C."/>
            <person name="Gnad F."/>
            <person name="Nielsen M.L."/>
            <person name="Rehman M."/>
            <person name="Walther T.C."/>
            <person name="Olsen J.V."/>
            <person name="Mann M."/>
        </authorList>
    </citation>
    <scope>ACETYLATION [LARGE SCALE ANALYSIS] AT LYS-262; LYS-735 AND LYS-756</scope>
    <scope>IDENTIFICATION BY MASS SPECTROMETRY [LARGE SCALE ANALYSIS]</scope>
</reference>
<reference key="19">
    <citation type="journal article" date="2010" name="Mol. Cell. Biol.">
        <title>The chaperone-like protein HYPK acts together with NatA in cotranslational N-terminal acetylation and prevention of Huntingtin aggregation.</title>
        <authorList>
            <person name="Arnesen T."/>
            <person name="Starheim K.K."/>
            <person name="Van Damme P."/>
            <person name="Evjenth R."/>
            <person name="Dinh H."/>
            <person name="Betts M.J."/>
            <person name="Ryningen A."/>
            <person name="Vandekerckhove J."/>
            <person name="Gevaert K."/>
            <person name="Anderson D."/>
        </authorList>
    </citation>
    <scope>FUNCTION</scope>
    <scope>IDENTIFICATION IN THE N-TERMINAL ACETYLTRANSFERASE A COMPLEX</scope>
    <scope>IDENTIFICATION IN THE N-TERMINAL ACETYLTRANSFERASE A/HYPK COMPLEX</scope>
    <scope>INTERACTION WITH HYPK AND NAA10</scope>
</reference>
<reference key="20">
    <citation type="journal article" date="2010" name="Sci. Signal.">
        <title>Quantitative phosphoproteomics reveals widespread full phosphorylation site occupancy during mitosis.</title>
        <authorList>
            <person name="Olsen J.V."/>
            <person name="Vermeulen M."/>
            <person name="Santamaria A."/>
            <person name="Kumar C."/>
            <person name="Miller M.L."/>
            <person name="Jensen L.J."/>
            <person name="Gnad F."/>
            <person name="Cox J."/>
            <person name="Jensen T.S."/>
            <person name="Nigg E.A."/>
            <person name="Brunak S."/>
            <person name="Mann M."/>
        </authorList>
    </citation>
    <scope>PHOSPHORYLATION [LARGE SCALE ANALYSIS] AT SER-856</scope>
    <scope>IDENTIFICATION BY MASS SPECTROMETRY [LARGE SCALE ANALYSIS]</scope>
    <source>
        <tissue>Cervix carcinoma</tissue>
    </source>
</reference>
<reference key="21">
    <citation type="journal article" date="2011" name="BMC Syst. Biol.">
        <title>Initial characterization of the human central proteome.</title>
        <authorList>
            <person name="Burkard T.R."/>
            <person name="Planyavsky M."/>
            <person name="Kaupe I."/>
            <person name="Breitwieser F.P."/>
            <person name="Buerckstuemmer T."/>
            <person name="Bennett K.L."/>
            <person name="Superti-Furga G."/>
            <person name="Colinge J."/>
        </authorList>
    </citation>
    <scope>IDENTIFICATION BY MASS SPECTROMETRY [LARGE SCALE ANALYSIS]</scope>
</reference>
<reference key="22">
    <citation type="journal article" date="2011" name="Sci. Signal.">
        <title>System-wide temporal characterization of the proteome and phosphoproteome of human embryonic stem cell differentiation.</title>
        <authorList>
            <person name="Rigbolt K.T."/>
            <person name="Prokhorova T.A."/>
            <person name="Akimov V."/>
            <person name="Henningsen J."/>
            <person name="Johansen P.T."/>
            <person name="Kratchmarova I."/>
            <person name="Kassem M."/>
            <person name="Mann M."/>
            <person name="Olsen J.V."/>
            <person name="Blagoev B."/>
        </authorList>
    </citation>
    <scope>PHOSPHORYLATION [LARGE SCALE ANALYSIS] AT SER-588 AND SER-856</scope>
    <scope>IDENTIFICATION BY MASS SPECTROMETRY [LARGE SCALE ANALYSIS]</scope>
</reference>
<reference key="23">
    <citation type="journal article" date="2012" name="Proc. Natl. Acad. Sci. U.S.A.">
        <title>N-terminal acetylome analyses and functional insights of the N-terminal acetyltransferase NatB.</title>
        <authorList>
            <person name="Van Damme P."/>
            <person name="Lasa M."/>
            <person name="Polevoda B."/>
            <person name="Gazquez C."/>
            <person name="Elosegui-Artola A."/>
            <person name="Kim D.S."/>
            <person name="De Juan-Pardo E."/>
            <person name="Demeyer K."/>
            <person name="Hole K."/>
            <person name="Larrea E."/>
            <person name="Timmerman E."/>
            <person name="Prieto J."/>
            <person name="Arnesen T."/>
            <person name="Sherman F."/>
            <person name="Gevaert K."/>
            <person name="Aldabe R."/>
        </authorList>
    </citation>
    <scope>IDENTIFICATION BY MASS SPECTROMETRY [LARGE SCALE ANALYSIS]</scope>
</reference>
<reference key="24">
    <citation type="journal article" date="2013" name="J. Proteome Res.">
        <title>Toward a comprehensive characterization of a human cancer cell phosphoproteome.</title>
        <authorList>
            <person name="Zhou H."/>
            <person name="Di Palma S."/>
            <person name="Preisinger C."/>
            <person name="Peng M."/>
            <person name="Polat A.N."/>
            <person name="Heck A.J."/>
            <person name="Mohammed S."/>
        </authorList>
    </citation>
    <scope>PHOSPHORYLATION [LARGE SCALE ANALYSIS] AT SER-302; SER-537; SER-588 AND SER-855</scope>
    <scope>IDENTIFICATION BY MASS SPECTROMETRY [LARGE SCALE ANALYSIS]</scope>
    <source>
        <tissue>Cervix carcinoma</tissue>
        <tissue>Erythroleukemia</tissue>
    </source>
</reference>
<reference evidence="16 17" key="25">
    <citation type="journal article" date="2018" name="Structure">
        <title>Structure of Human NatA and Its Regulation by the Huntingtin Interacting Protein HYPK.</title>
        <authorList>
            <person name="Gottlieb L."/>
            <person name="Marmorstein R."/>
        </authorList>
    </citation>
    <scope>X-RAY CRYSTALLOGRAPHY (2.80 ANGSTROMS) IN COMPLEX WITH NAA10 AND HYPK</scope>
    <scope>FUNCTION</scope>
    <scope>IDENTIFICATION IN THE N-TERMINAL ACETYLTRANSFERASE A/HYPK COMPLEX</scope>
    <scope>IDENTIFICATION IN THE N-TERMINAL ACETYLTRANSFERASE E COMPLEX</scope>
    <scope>INTERACTION WITH NAA10; NAA50 AND HYPK</scope>
    <scope>MUTAGENESIS OF TYR-834</scope>
</reference>
<reference evidence="18 19" key="26">
    <citation type="journal article" date="2020" name="Nat. Commun.">
        <title>Molecular basis for N-terminal acetylation by human NatE and its modulation by HYPK.</title>
        <authorList>
            <person name="Deng S."/>
            <person name="McTiernan N."/>
            <person name="Wei X."/>
            <person name="Arnesen T."/>
            <person name="Marmorstein R."/>
        </authorList>
    </citation>
    <scope>STRUCTURE BY ELECTRON MICROSCOPY (3.02 ANGSTROMS)</scope>
    <scope>FUNCTION</scope>
    <scope>IDENTIFICATION IN THE N-TERMINAL ACETYLTRANSFERASE A COMPLEX</scope>
    <scope>IDENTIFICATION IN THE N-TERMINAL ACETYLTRANSFERASE A/HYPK COMPLEX</scope>
    <scope>IDENTIFICATIONIN THE N-TERMINAL ACETYLTRANSFERASE E COMPLEX</scope>
    <scope>IDENTIFICATION IN THE N-TERMINAL ACETYLTRANSFERASE E/HYPK COMPLEX</scope>
    <scope>INTERACTION WITH NAA10; HYPK AND NAA50</scope>
    <scope>MUTAGENESIS OF THR-406 AND LEU-814</scope>
</reference>
<reference key="27">
    <citation type="journal article" date="2017" name="Nat. Genet.">
        <title>Targeted sequencing identifies 91 neurodevelopmental-disorder risk genes with autism and developmental-disability biases.</title>
        <authorList>
            <person name="Stessman H.A."/>
            <person name="Xiong B."/>
            <person name="Coe B.P."/>
            <person name="Wang T."/>
            <person name="Hoekzema K."/>
            <person name="Fenckova M."/>
            <person name="Kvarnung M."/>
            <person name="Gerdts J."/>
            <person name="Trinh S."/>
            <person name="Cosemans N."/>
            <person name="Vives L."/>
            <person name="Lin J."/>
            <person name="Turner T.N."/>
            <person name="Santen G."/>
            <person name="Ruivenkamp C."/>
            <person name="Kriek M."/>
            <person name="van Haeringen A."/>
            <person name="Aten E."/>
            <person name="Friend K."/>
            <person name="Liebelt J."/>
            <person name="Barnett C."/>
            <person name="Haan E."/>
            <person name="Shaw M."/>
            <person name="Gecz J."/>
            <person name="Anderlid B.M."/>
            <person name="Nordgren A."/>
            <person name="Lindstrand A."/>
            <person name="Schwartz C."/>
            <person name="Kooy R.F."/>
            <person name="Vandeweyer G."/>
            <person name="Helsmoortel C."/>
            <person name="Romano C."/>
            <person name="Alberti A."/>
            <person name="Vinci M."/>
            <person name="Avola E."/>
            <person name="Giusto S."/>
            <person name="Courchesne E."/>
            <person name="Pramparo T."/>
            <person name="Pierce K."/>
            <person name="Nalabolu S."/>
            <person name="Amaral D.G."/>
            <person name="Scheffer I.E."/>
            <person name="Delatycki M.B."/>
            <person name="Lockhart P.J."/>
            <person name="Hormozdiari F."/>
            <person name="Harich B."/>
            <person name="Castells-Nobau A."/>
            <person name="Xia K."/>
            <person name="Peeters H."/>
            <person name="Nordenskjoeld M."/>
            <person name="Schenck A."/>
            <person name="Bernier R.A."/>
            <person name="Eichler E.E."/>
        </authorList>
    </citation>
    <scope>INVOLVEMENT IN MRD50</scope>
    <scope>VARIANTS MRD50 52-LYS--ILE-866 DEL; ASN-112; 290-GLY--ILE-866 DEL; GLU-450; VAL-475; 565-TYR--ILE-866 DEL; 696-LYS--ILE-866 DEL; 782-ARG--ILE-866 DEL AND 797-ARG--ILE-866 DEL</scope>
</reference>